<evidence type="ECO:0000255" key="1">
    <source>
        <dbReference type="HAMAP-Rule" id="MF_01597"/>
    </source>
</evidence>
<evidence type="ECO:0000305" key="2"/>
<gene>
    <name evidence="1" type="primary">mdtI</name>
    <name type="ordered locus">YPO2069</name>
    <name type="ordered locus">y2241</name>
    <name type="ordered locus">YP_1912</name>
</gene>
<sequence length="109" mass="11917">MQQLEFYPIAFLILAVMLEIVANILLKMSDGFRRKWLGILSLLSVLGAFSALAQAVKGIELSVAYALWGGFGIAATVAAGWILFNQRLNYKGWIGLILLLAGMVMIKLS</sequence>
<feature type="chain" id="PRO_0000331157" description="Spermidine export protein MdtI">
    <location>
        <begin position="1"/>
        <end position="109"/>
    </location>
</feature>
<feature type="transmembrane region" description="Helical" evidence="1">
    <location>
        <begin position="6"/>
        <end position="26"/>
    </location>
</feature>
<feature type="transmembrane region" description="Helical" evidence="1">
    <location>
        <begin position="36"/>
        <end position="56"/>
    </location>
</feature>
<feature type="transmembrane region" description="Helical" evidence="1">
    <location>
        <begin position="64"/>
        <end position="84"/>
    </location>
</feature>
<feature type="transmembrane region" description="Helical" evidence="1">
    <location>
        <begin position="88"/>
        <end position="108"/>
    </location>
</feature>
<keyword id="KW-0997">Cell inner membrane</keyword>
<keyword id="KW-1003">Cell membrane</keyword>
<keyword id="KW-0472">Membrane</keyword>
<keyword id="KW-1185">Reference proteome</keyword>
<keyword id="KW-0812">Transmembrane</keyword>
<keyword id="KW-1133">Transmembrane helix</keyword>
<keyword id="KW-0813">Transport</keyword>
<name>MDTI_YERPE</name>
<reference key="1">
    <citation type="journal article" date="2001" name="Nature">
        <title>Genome sequence of Yersinia pestis, the causative agent of plague.</title>
        <authorList>
            <person name="Parkhill J."/>
            <person name="Wren B.W."/>
            <person name="Thomson N.R."/>
            <person name="Titball R.W."/>
            <person name="Holden M.T.G."/>
            <person name="Prentice M.B."/>
            <person name="Sebaihia M."/>
            <person name="James K.D."/>
            <person name="Churcher C.M."/>
            <person name="Mungall K.L."/>
            <person name="Baker S."/>
            <person name="Basham D."/>
            <person name="Bentley S.D."/>
            <person name="Brooks K."/>
            <person name="Cerdeno-Tarraga A.-M."/>
            <person name="Chillingworth T."/>
            <person name="Cronin A."/>
            <person name="Davies R.M."/>
            <person name="Davis P."/>
            <person name="Dougan G."/>
            <person name="Feltwell T."/>
            <person name="Hamlin N."/>
            <person name="Holroyd S."/>
            <person name="Jagels K."/>
            <person name="Karlyshev A.V."/>
            <person name="Leather S."/>
            <person name="Moule S."/>
            <person name="Oyston P.C.F."/>
            <person name="Quail M.A."/>
            <person name="Rutherford K.M."/>
            <person name="Simmonds M."/>
            <person name="Skelton J."/>
            <person name="Stevens K."/>
            <person name="Whitehead S."/>
            <person name="Barrell B.G."/>
        </authorList>
    </citation>
    <scope>NUCLEOTIDE SEQUENCE [LARGE SCALE GENOMIC DNA]</scope>
    <source>
        <strain>CO-92 / Biovar Orientalis</strain>
    </source>
</reference>
<reference key="2">
    <citation type="journal article" date="2002" name="J. Bacteriol.">
        <title>Genome sequence of Yersinia pestis KIM.</title>
        <authorList>
            <person name="Deng W."/>
            <person name="Burland V."/>
            <person name="Plunkett G. III"/>
            <person name="Boutin A."/>
            <person name="Mayhew G.F."/>
            <person name="Liss P."/>
            <person name="Perna N.T."/>
            <person name="Rose D.J."/>
            <person name="Mau B."/>
            <person name="Zhou S."/>
            <person name="Schwartz D.C."/>
            <person name="Fetherston J.D."/>
            <person name="Lindler L.E."/>
            <person name="Brubaker R.R."/>
            <person name="Plano G.V."/>
            <person name="Straley S.C."/>
            <person name="McDonough K.A."/>
            <person name="Nilles M.L."/>
            <person name="Matson J.S."/>
            <person name="Blattner F.R."/>
            <person name="Perry R.D."/>
        </authorList>
    </citation>
    <scope>NUCLEOTIDE SEQUENCE [LARGE SCALE GENOMIC DNA]</scope>
    <source>
        <strain>KIM10+ / Biovar Mediaevalis</strain>
    </source>
</reference>
<reference key="3">
    <citation type="journal article" date="2004" name="DNA Res.">
        <title>Complete genome sequence of Yersinia pestis strain 91001, an isolate avirulent to humans.</title>
        <authorList>
            <person name="Song Y."/>
            <person name="Tong Z."/>
            <person name="Wang J."/>
            <person name="Wang L."/>
            <person name="Guo Z."/>
            <person name="Han Y."/>
            <person name="Zhang J."/>
            <person name="Pei D."/>
            <person name="Zhou D."/>
            <person name="Qin H."/>
            <person name="Pang X."/>
            <person name="Han Y."/>
            <person name="Zhai J."/>
            <person name="Li M."/>
            <person name="Cui B."/>
            <person name="Qi Z."/>
            <person name="Jin L."/>
            <person name="Dai R."/>
            <person name="Chen F."/>
            <person name="Li S."/>
            <person name="Ye C."/>
            <person name="Du Z."/>
            <person name="Lin W."/>
            <person name="Wang J."/>
            <person name="Yu J."/>
            <person name="Yang H."/>
            <person name="Wang J."/>
            <person name="Huang P."/>
            <person name="Yang R."/>
        </authorList>
    </citation>
    <scope>NUCLEOTIDE SEQUENCE [LARGE SCALE GENOMIC DNA]</scope>
    <source>
        <strain>91001 / Biovar Mediaevalis</strain>
    </source>
</reference>
<comment type="function">
    <text evidence="1">Catalyzes the excretion of spermidine.</text>
</comment>
<comment type="subunit">
    <text evidence="1">Forms a complex with MdtJ.</text>
</comment>
<comment type="subcellular location">
    <subcellularLocation>
        <location evidence="1">Cell inner membrane</location>
        <topology evidence="1">Multi-pass membrane protein</topology>
    </subcellularLocation>
</comment>
<comment type="similarity">
    <text evidence="1">Belongs to the drug/metabolite transporter (DMT) superfamily. Small multidrug resistance (SMR) (TC 2.A.7.1) family. MdtI subfamily.</text>
</comment>
<comment type="sequence caution" evidence="2">
    <conflict type="erroneous initiation">
        <sequence resource="EMBL-CDS" id="AAM85801"/>
    </conflict>
</comment>
<comment type="sequence caution" evidence="2">
    <conflict type="erroneous initiation">
        <sequence resource="EMBL-CDS" id="AAS62130"/>
    </conflict>
</comment>
<comment type="sequence caution" evidence="2">
    <conflict type="erroneous initiation">
        <sequence resource="EMBL-CDS" id="CAL20704"/>
    </conflict>
</comment>
<protein>
    <recommendedName>
        <fullName evidence="1">Spermidine export protein MdtI</fullName>
    </recommendedName>
</protein>
<accession>Q0WF87</accession>
<accession>Q74U39</accession>
<accession>Q8D0F4</accession>
<organism>
    <name type="scientific">Yersinia pestis</name>
    <dbReference type="NCBI Taxonomy" id="632"/>
    <lineage>
        <taxon>Bacteria</taxon>
        <taxon>Pseudomonadati</taxon>
        <taxon>Pseudomonadota</taxon>
        <taxon>Gammaproteobacteria</taxon>
        <taxon>Enterobacterales</taxon>
        <taxon>Yersiniaceae</taxon>
        <taxon>Yersinia</taxon>
    </lineage>
</organism>
<dbReference type="EMBL" id="AL590842">
    <property type="protein sequence ID" value="CAL20704.1"/>
    <property type="status" value="ALT_INIT"/>
    <property type="molecule type" value="Genomic_DNA"/>
</dbReference>
<dbReference type="EMBL" id="AE009952">
    <property type="protein sequence ID" value="AAM85801.1"/>
    <property type="status" value="ALT_INIT"/>
    <property type="molecule type" value="Genomic_DNA"/>
</dbReference>
<dbReference type="EMBL" id="AE017042">
    <property type="protein sequence ID" value="AAS62130.1"/>
    <property type="status" value="ALT_INIT"/>
    <property type="molecule type" value="Genomic_DNA"/>
</dbReference>
<dbReference type="PIR" id="AE0252">
    <property type="entry name" value="AE0252"/>
</dbReference>
<dbReference type="RefSeq" id="WP_002211187.1">
    <property type="nucleotide sequence ID" value="NZ_WUCM01000062.1"/>
</dbReference>
<dbReference type="RefSeq" id="YP_002347051.1">
    <property type="nucleotide sequence ID" value="NC_003143.1"/>
</dbReference>
<dbReference type="SMR" id="Q0WF87"/>
<dbReference type="IntAct" id="Q0WF87">
    <property type="interactions" value="2"/>
</dbReference>
<dbReference type="STRING" id="214092.YPO2069"/>
<dbReference type="PaxDb" id="214092-YPO2069"/>
<dbReference type="DNASU" id="1147188"/>
<dbReference type="EnsemblBacteria" id="AAS62130">
    <property type="protein sequence ID" value="AAS62130"/>
    <property type="gene ID" value="YP_1912"/>
</dbReference>
<dbReference type="GeneID" id="57976592"/>
<dbReference type="KEGG" id="ype:YPO2069"/>
<dbReference type="KEGG" id="ypk:y2241"/>
<dbReference type="KEGG" id="ypm:YP_1912"/>
<dbReference type="PATRIC" id="fig|214092.21.peg.2458"/>
<dbReference type="eggNOG" id="COG2076">
    <property type="taxonomic scope" value="Bacteria"/>
</dbReference>
<dbReference type="HOGENOM" id="CLU_133067_0_4_6"/>
<dbReference type="OMA" id="VAAGWIM"/>
<dbReference type="OrthoDB" id="71834at2"/>
<dbReference type="Proteomes" id="UP000000815">
    <property type="component" value="Chromosome"/>
</dbReference>
<dbReference type="Proteomes" id="UP000001019">
    <property type="component" value="Chromosome"/>
</dbReference>
<dbReference type="Proteomes" id="UP000002490">
    <property type="component" value="Chromosome"/>
</dbReference>
<dbReference type="GO" id="GO:0005886">
    <property type="term" value="C:plasma membrane"/>
    <property type="evidence" value="ECO:0000318"/>
    <property type="project" value="GO_Central"/>
</dbReference>
<dbReference type="GO" id="GO:0015199">
    <property type="term" value="F:amino-acid betaine transmembrane transporter activity"/>
    <property type="evidence" value="ECO:0000318"/>
    <property type="project" value="GO_Central"/>
</dbReference>
<dbReference type="GO" id="GO:0015297">
    <property type="term" value="F:antiporter activity"/>
    <property type="evidence" value="ECO:0000318"/>
    <property type="project" value="GO_Central"/>
</dbReference>
<dbReference type="GO" id="GO:0015220">
    <property type="term" value="F:choline transmembrane transporter activity"/>
    <property type="evidence" value="ECO:0000318"/>
    <property type="project" value="GO_Central"/>
</dbReference>
<dbReference type="GO" id="GO:0015606">
    <property type="term" value="F:spermidine transmembrane transporter activity"/>
    <property type="evidence" value="ECO:0007669"/>
    <property type="project" value="UniProtKB-UniRule"/>
</dbReference>
<dbReference type="GO" id="GO:0015871">
    <property type="term" value="P:choline transport"/>
    <property type="evidence" value="ECO:0000318"/>
    <property type="project" value="GO_Central"/>
</dbReference>
<dbReference type="GO" id="GO:0031460">
    <property type="term" value="P:glycine betaine transport"/>
    <property type="evidence" value="ECO:0000318"/>
    <property type="project" value="GO_Central"/>
</dbReference>
<dbReference type="GO" id="GO:1903711">
    <property type="term" value="P:spermidine transmembrane transport"/>
    <property type="evidence" value="ECO:0000318"/>
    <property type="project" value="GO_Central"/>
</dbReference>
<dbReference type="FunFam" id="1.10.3730.20:FF:000001">
    <property type="entry name" value="Quaternary ammonium compound resistance transporter SugE"/>
    <property type="match status" value="1"/>
</dbReference>
<dbReference type="Gene3D" id="1.10.3730.20">
    <property type="match status" value="1"/>
</dbReference>
<dbReference type="HAMAP" id="MF_01597">
    <property type="entry name" value="MdtI"/>
    <property type="match status" value="1"/>
</dbReference>
<dbReference type="InterPro" id="IPR000390">
    <property type="entry name" value="Small_drug/metabolite_transptr"/>
</dbReference>
<dbReference type="InterPro" id="IPR045324">
    <property type="entry name" value="Small_multidrug_res"/>
</dbReference>
<dbReference type="InterPro" id="IPR023737">
    <property type="entry name" value="Spermidine_export_MdtI"/>
</dbReference>
<dbReference type="NCBIfam" id="NF007934">
    <property type="entry name" value="PRK10650.1"/>
    <property type="match status" value="1"/>
</dbReference>
<dbReference type="PANTHER" id="PTHR30561">
    <property type="entry name" value="SMR FAMILY PROTON-DEPENDENT DRUG EFFLUX TRANSPORTER SUGE"/>
    <property type="match status" value="1"/>
</dbReference>
<dbReference type="PANTHER" id="PTHR30561:SF6">
    <property type="entry name" value="SPERMIDINE EXPORT PROTEIN MDTI"/>
    <property type="match status" value="1"/>
</dbReference>
<dbReference type="Pfam" id="PF00893">
    <property type="entry name" value="Multi_Drug_Res"/>
    <property type="match status" value="1"/>
</dbReference>
<dbReference type="SUPFAM" id="SSF103481">
    <property type="entry name" value="Multidrug resistance efflux transporter EmrE"/>
    <property type="match status" value="1"/>
</dbReference>
<proteinExistence type="inferred from homology"/>